<sequence length="436" mass="48732">MANEGSDPLLQYMISPRLKKPPQLLFPLPEDNEVAIPMPMTPSEFKERLIFGPFSCSPRDSSHFIDSMKQPSPSSSSTAVNNPFSDSSTLDPLLPPPPPQPEPWLSDQTSSHCQGHALHRSKTAPAMAVINDLHHPIRQKDPTETSRSVVRQAFALLVVYLSLGVLIYWLNRDHYVVNQTHPVVDGLYFCIVTMCTIGYGDITPNSVVTKLFSIMFVLVGFGFIDILLSGMVSYVLDLQESYMLDSAKRRDEPEKRRSYIIDVKKGRMRIRLKVALALGVVVLCIAVGVGIMHFIEEIGWLDSFYLSVMSVTTVGYGDRAFKTLPGRLFAAIWLLVSTLAVARAFLYLAEARVDKRNRERAKKVLCETMSVSQFFAADIDNNGCVSKAEYVIYKLKEMEKITDKDILPISKQFDKLDRCSNGKITLLDLLEGGSGD</sequence>
<evidence type="ECO:0000255" key="1"/>
<evidence type="ECO:0000255" key="2">
    <source>
        <dbReference type="PROSITE-ProRule" id="PRU10142"/>
    </source>
</evidence>
<evidence type="ECO:0000256" key="3">
    <source>
        <dbReference type="SAM" id="MobiDB-lite"/>
    </source>
</evidence>
<evidence type="ECO:0000269" key="4">
    <source>
    </source>
</evidence>
<evidence type="ECO:0000269" key="5">
    <source>
    </source>
</evidence>
<evidence type="ECO:0000269" key="6">
    <source>
    </source>
</evidence>
<evidence type="ECO:0000269" key="7">
    <source>
    </source>
</evidence>
<evidence type="ECO:0000269" key="8">
    <source>
    </source>
</evidence>
<evidence type="ECO:0000269" key="9">
    <source>
    </source>
</evidence>
<evidence type="ECO:0000303" key="10">
    <source>
    </source>
</evidence>
<evidence type="ECO:0000303" key="11">
    <source>
    </source>
</evidence>
<evidence type="ECO:0000305" key="12"/>
<evidence type="ECO:0000312" key="13">
    <source>
        <dbReference type="Araport" id="AT4G18160"/>
    </source>
</evidence>
<evidence type="ECO:0000312" key="14">
    <source>
        <dbReference type="EMBL" id="CAB53657.1"/>
    </source>
</evidence>
<proteinExistence type="evidence at transcript level"/>
<feature type="chain" id="PRO_0000101779" description="Two-pore potassium channel 3">
    <location>
        <begin position="1"/>
        <end position="436"/>
    </location>
</feature>
<feature type="topological domain" description="Cytoplasmic" evidence="1">
    <location>
        <begin position="1"/>
        <end position="148"/>
    </location>
</feature>
<feature type="transmembrane region" description="Helical" evidence="1">
    <location>
        <begin position="149"/>
        <end position="169"/>
    </location>
</feature>
<feature type="intramembrane region" description="Pore-forming; Name=Pore-forming 1" evidence="1">
    <location>
        <begin position="185"/>
        <end position="204"/>
    </location>
</feature>
<feature type="transmembrane region" description="Helical" evidence="1">
    <location>
        <begin position="212"/>
        <end position="232"/>
    </location>
</feature>
<feature type="topological domain" description="Cytoplasmic" evidence="1">
    <location>
        <begin position="233"/>
        <end position="274"/>
    </location>
</feature>
<feature type="transmembrane region" description="Helical" evidence="1">
    <location>
        <begin position="275"/>
        <end position="295"/>
    </location>
</feature>
<feature type="intramembrane region" description="Pore-forming; Name=Pore-forming 2" evidence="1">
    <location>
        <begin position="302"/>
        <end position="321"/>
    </location>
</feature>
<feature type="transmembrane region" description="Helical" evidence="1">
    <location>
        <begin position="328"/>
        <end position="348"/>
    </location>
</feature>
<feature type="topological domain" description="Cytoplasmic" evidence="1">
    <location>
        <begin position="349"/>
        <end position="436"/>
    </location>
</feature>
<feature type="domain" description="EF-hand 1">
    <location>
        <begin position="365"/>
        <end position="400"/>
    </location>
</feature>
<feature type="domain" description="EF-hand 2">
    <location>
        <begin position="404"/>
        <end position="436"/>
    </location>
</feature>
<feature type="region of interest" description="Disordered" evidence="3">
    <location>
        <begin position="62"/>
        <end position="117"/>
    </location>
</feature>
<feature type="compositionally biased region" description="Low complexity" evidence="3">
    <location>
        <begin position="71"/>
        <end position="92"/>
    </location>
</feature>
<feature type="compositionally biased region" description="Pro residues" evidence="3">
    <location>
        <begin position="93"/>
        <end position="102"/>
    </location>
</feature>
<feature type="binding site" evidence="2">
    <location>
        <position position="378"/>
    </location>
    <ligand>
        <name>Ca(2+)</name>
        <dbReference type="ChEBI" id="CHEBI:29108"/>
        <label>1</label>
    </ligand>
</feature>
<feature type="binding site" evidence="2">
    <location>
        <position position="380"/>
    </location>
    <ligand>
        <name>Ca(2+)</name>
        <dbReference type="ChEBI" id="CHEBI:29108"/>
        <label>1</label>
    </ligand>
</feature>
<feature type="binding site" evidence="2">
    <location>
        <position position="382"/>
    </location>
    <ligand>
        <name>Ca(2+)</name>
        <dbReference type="ChEBI" id="CHEBI:29108"/>
        <label>1</label>
    </ligand>
</feature>
<feature type="binding site" evidence="2">
    <location>
        <position position="384"/>
    </location>
    <ligand>
        <name>Ca(2+)</name>
        <dbReference type="ChEBI" id="CHEBI:29108"/>
        <label>1</label>
    </ligand>
</feature>
<feature type="binding site" evidence="2">
    <location>
        <position position="389"/>
    </location>
    <ligand>
        <name>Ca(2+)</name>
        <dbReference type="ChEBI" id="CHEBI:29108"/>
        <label>1</label>
    </ligand>
</feature>
<feature type="binding site" evidence="12">
    <location>
        <position position="417"/>
    </location>
    <ligand>
        <name>Ca(2+)</name>
        <dbReference type="ChEBI" id="CHEBI:29108"/>
        <label>2</label>
    </ligand>
</feature>
<feature type="binding site" evidence="12">
    <location>
        <position position="421"/>
    </location>
    <ligand>
        <name>Ca(2+)</name>
        <dbReference type="ChEBI" id="CHEBI:29108"/>
        <label>2</label>
    </ligand>
</feature>
<feature type="binding site" evidence="12">
    <location>
        <position position="423"/>
    </location>
    <ligand>
        <name>Ca(2+)</name>
        <dbReference type="ChEBI" id="CHEBI:29108"/>
        <label>2</label>
    </ligand>
</feature>
<feature type="binding site" evidence="12">
    <location>
        <position position="428"/>
    </location>
    <ligand>
        <name>Ca(2+)</name>
        <dbReference type="ChEBI" id="CHEBI:29108"/>
        <label>2</label>
    </ligand>
</feature>
<protein>
    <recommendedName>
        <fullName evidence="11">Two-pore potassium channel 3</fullName>
        <shortName evidence="11">AtTPK3</shortName>
    </recommendedName>
    <alternativeName>
        <fullName evidence="10">Calcium-activated outward-rectifying potassium channel 6</fullName>
        <shortName evidence="10">AtKCO6</shortName>
    </alternativeName>
</protein>
<name>KCO6_ARATH</name>
<accession>Q9SVV6</accession>
<dbReference type="EMBL" id="AL110123">
    <property type="protein sequence ID" value="CAB53657.1"/>
    <property type="molecule type" value="Genomic_DNA"/>
</dbReference>
<dbReference type="EMBL" id="AL161548">
    <property type="protein sequence ID" value="CAB78818.1"/>
    <property type="molecule type" value="Genomic_DNA"/>
</dbReference>
<dbReference type="EMBL" id="CP002687">
    <property type="protein sequence ID" value="AEE84005.1"/>
    <property type="molecule type" value="Genomic_DNA"/>
</dbReference>
<dbReference type="PIR" id="T14816">
    <property type="entry name" value="T14816"/>
</dbReference>
<dbReference type="RefSeq" id="NP_193550.1">
    <property type="nucleotide sequence ID" value="NM_117926.3"/>
</dbReference>
<dbReference type="SMR" id="Q9SVV6"/>
<dbReference type="BioGRID" id="12834">
    <property type="interactions" value="2"/>
</dbReference>
<dbReference type="FunCoup" id="Q9SVV6">
    <property type="interactions" value="99"/>
</dbReference>
<dbReference type="IntAct" id="Q9SVV6">
    <property type="interactions" value="1"/>
</dbReference>
<dbReference type="STRING" id="3702.Q9SVV6"/>
<dbReference type="TCDB" id="1.A.1.7.7">
    <property type="family name" value="the voltage-gated ion channel (vic) superfamily"/>
</dbReference>
<dbReference type="GlyGen" id="Q9SVV6">
    <property type="glycosylation" value="1 site"/>
</dbReference>
<dbReference type="PaxDb" id="3702-AT4G18160.1"/>
<dbReference type="ProteomicsDB" id="230170"/>
<dbReference type="EnsemblPlants" id="AT4G18160.1">
    <property type="protein sequence ID" value="AT4G18160.1"/>
    <property type="gene ID" value="AT4G18160"/>
</dbReference>
<dbReference type="GeneID" id="827541"/>
<dbReference type="Gramene" id="AT4G18160.1">
    <property type="protein sequence ID" value="AT4G18160.1"/>
    <property type="gene ID" value="AT4G18160"/>
</dbReference>
<dbReference type="KEGG" id="ath:AT4G18160"/>
<dbReference type="Araport" id="AT4G18160"/>
<dbReference type="TAIR" id="AT4G18160">
    <property type="gene designation" value="KCO6"/>
</dbReference>
<dbReference type="eggNOG" id="KOG1418">
    <property type="taxonomic scope" value="Eukaryota"/>
</dbReference>
<dbReference type="HOGENOM" id="CLU_033675_2_0_1"/>
<dbReference type="InParanoid" id="Q9SVV6"/>
<dbReference type="OMA" id="HEIARNY"/>
<dbReference type="OrthoDB" id="415460at2759"/>
<dbReference type="PhylomeDB" id="Q9SVV6"/>
<dbReference type="PRO" id="PR:Q9SVV6"/>
<dbReference type="Proteomes" id="UP000006548">
    <property type="component" value="Chromosome 4"/>
</dbReference>
<dbReference type="ExpressionAtlas" id="Q9SVV6">
    <property type="expression patterns" value="baseline and differential"/>
</dbReference>
<dbReference type="GO" id="GO:0009533">
    <property type="term" value="C:chloroplast stromal thylakoid"/>
    <property type="evidence" value="ECO:0000314"/>
    <property type="project" value="TAIR"/>
</dbReference>
<dbReference type="GO" id="GO:0009705">
    <property type="term" value="C:plant-type vacuole membrane"/>
    <property type="evidence" value="ECO:0000314"/>
    <property type="project" value="UniProtKB"/>
</dbReference>
<dbReference type="GO" id="GO:0034705">
    <property type="term" value="C:potassium channel complex"/>
    <property type="evidence" value="ECO:0000314"/>
    <property type="project" value="TAIR"/>
</dbReference>
<dbReference type="GO" id="GO:0005773">
    <property type="term" value="C:vacuole"/>
    <property type="evidence" value="ECO:0000314"/>
    <property type="project" value="TAIR"/>
</dbReference>
<dbReference type="GO" id="GO:0046872">
    <property type="term" value="F:metal ion binding"/>
    <property type="evidence" value="ECO:0007669"/>
    <property type="project" value="UniProtKB-KW"/>
</dbReference>
<dbReference type="GO" id="GO:0005267">
    <property type="term" value="F:potassium channel activity"/>
    <property type="evidence" value="ECO:0000314"/>
    <property type="project" value="TAIR"/>
</dbReference>
<dbReference type="GO" id="GO:0071257">
    <property type="term" value="P:cellular response to electrical stimulus"/>
    <property type="evidence" value="ECO:0000314"/>
    <property type="project" value="TAIR"/>
</dbReference>
<dbReference type="GO" id="GO:0010196">
    <property type="term" value="P:nonphotochemical quenching"/>
    <property type="evidence" value="ECO:0000315"/>
    <property type="project" value="TAIR"/>
</dbReference>
<dbReference type="GO" id="GO:0097623">
    <property type="term" value="P:potassium ion export across plasma membrane"/>
    <property type="evidence" value="ECO:0000314"/>
    <property type="project" value="TAIR"/>
</dbReference>
<dbReference type="GO" id="GO:1990573">
    <property type="term" value="P:potassium ion import across plasma membrane"/>
    <property type="evidence" value="ECO:0000314"/>
    <property type="project" value="TAIR"/>
</dbReference>
<dbReference type="GO" id="GO:0071805">
    <property type="term" value="P:potassium ion transmembrane transport"/>
    <property type="evidence" value="ECO:0000314"/>
    <property type="project" value="TAIR"/>
</dbReference>
<dbReference type="GO" id="GO:0010027">
    <property type="term" value="P:thylakoid membrane organization"/>
    <property type="evidence" value="ECO:0000315"/>
    <property type="project" value="TAIR"/>
</dbReference>
<dbReference type="FunFam" id="1.10.287.70:FF:000102">
    <property type="entry name" value="Two-pore potassium channel 3"/>
    <property type="match status" value="1"/>
</dbReference>
<dbReference type="FunFam" id="1.10.287.70:FF:000165">
    <property type="entry name" value="Two-pore potassium channel 5"/>
    <property type="match status" value="1"/>
</dbReference>
<dbReference type="Gene3D" id="1.10.287.70">
    <property type="match status" value="2"/>
</dbReference>
<dbReference type="Gene3D" id="1.10.238.10">
    <property type="entry name" value="EF-hand"/>
    <property type="match status" value="1"/>
</dbReference>
<dbReference type="InterPro" id="IPR003280">
    <property type="entry name" value="2pore_dom_K_chnl"/>
</dbReference>
<dbReference type="InterPro" id="IPR011992">
    <property type="entry name" value="EF-hand-dom_pair"/>
</dbReference>
<dbReference type="InterPro" id="IPR018247">
    <property type="entry name" value="EF_Hand_1_Ca_BS"/>
</dbReference>
<dbReference type="InterPro" id="IPR013099">
    <property type="entry name" value="K_chnl_dom"/>
</dbReference>
<dbReference type="PANTHER" id="PTHR11003">
    <property type="entry name" value="POTASSIUM CHANNEL, SUBFAMILY K"/>
    <property type="match status" value="1"/>
</dbReference>
<dbReference type="PANTHER" id="PTHR11003:SF282">
    <property type="entry name" value="TWO-PORE POTASSIUM CHANNEL 3"/>
    <property type="match status" value="1"/>
</dbReference>
<dbReference type="Pfam" id="PF07885">
    <property type="entry name" value="Ion_trans_2"/>
    <property type="match status" value="2"/>
</dbReference>
<dbReference type="PRINTS" id="PR01333">
    <property type="entry name" value="2POREKCHANEL"/>
</dbReference>
<dbReference type="SUPFAM" id="SSF47473">
    <property type="entry name" value="EF-hand"/>
    <property type="match status" value="1"/>
</dbReference>
<dbReference type="SUPFAM" id="SSF81324">
    <property type="entry name" value="Voltage-gated potassium channels"/>
    <property type="match status" value="2"/>
</dbReference>
<dbReference type="PROSITE" id="PS00018">
    <property type="entry name" value="EF_HAND_1"/>
    <property type="match status" value="1"/>
</dbReference>
<gene>
    <name evidence="11" type="primary">TPK3</name>
    <name evidence="10" type="synonym">KCO6</name>
    <name evidence="13" type="ordered locus">At4g18160</name>
    <name evidence="14" type="ORF">F15J5.130</name>
</gene>
<keyword id="KW-0106">Calcium</keyword>
<keyword id="KW-0150">Chloroplast</keyword>
<keyword id="KW-0407">Ion channel</keyword>
<keyword id="KW-0406">Ion transport</keyword>
<keyword id="KW-0472">Membrane</keyword>
<keyword id="KW-0479">Metal-binding</keyword>
<keyword id="KW-0934">Plastid</keyword>
<keyword id="KW-0630">Potassium</keyword>
<keyword id="KW-0631">Potassium channel</keyword>
<keyword id="KW-0633">Potassium transport</keyword>
<keyword id="KW-1185">Reference proteome</keyword>
<keyword id="KW-0677">Repeat</keyword>
<keyword id="KW-0793">Thylakoid</keyword>
<keyword id="KW-0812">Transmembrane</keyword>
<keyword id="KW-1133">Transmembrane helix</keyword>
<keyword id="KW-0813">Transport</keyword>
<keyword id="KW-0926">Vacuole</keyword>
<comment type="function">
    <text evidence="8">Two-pore potassium channel modulating the proton motive force (pmf) necessary to convert photochemical energy into physiological functions. Mediates the potassium efflux from the thylakoid lumen required for the regulation of the transmembrane electrical potential, the enhancement of the pH gradient for ATP synthesis, the regulation of electron flow, and pH-mediated photoprotective responses. Requires calcium for channel activity.</text>
</comment>
<comment type="activity regulation">
    <text evidence="8">Inhibited by barium, but not by tetraethylammonium.</text>
</comment>
<comment type="subunit">
    <text evidence="12">Homodimer.</text>
</comment>
<comment type="subcellular location">
    <subcellularLocation>
        <location evidence="5 6 7 9">Vacuole membrane</location>
        <topology evidence="1">Multi-pass membrane protein</topology>
    </subcellularLocation>
    <subcellularLocation>
        <location evidence="8">Plastid</location>
        <location evidence="8">Chloroplast thylakoid membrane</location>
        <topology evidence="1">Multi-pass membrane protein</topology>
    </subcellularLocation>
    <text>PubMed:24009357 shows a thylakoid location instead of the tonoplast location previously described.</text>
</comment>
<comment type="tissue specificity">
    <text evidence="4 5 9">Expressed in roots, cotyledons, stems, hypocotyls, leaves and flowers (PubMed:31053658). Detected in root tips and in mesophyll cells and guard cells of the leaves.</text>
</comment>
<comment type="developmental stage">
    <text evidence="9">In flowers, mainly observed in the stamina and pollen sacs (PubMed:31053658). In mature leaves, restricted to hydathodes (PubMed:31053658).</text>
</comment>
<comment type="domain">
    <text>Each of the two pore-forming region (also called P-domain or P-loop) is enclosed by two transmembrane segments (2P/4TM) and contains the GYGD signature motif which seems to be involved in potassium selectivity. The C-terminus is not required for transport to the vacuolar membrane.</text>
</comment>
<comment type="disruption phenotype">
    <text evidence="8 9">RNAi-mediated knockdown of the protein causes no effects on germination or on plants grown under normal conditions, but decreases the rosette size, enhances the accumulation of anthocyans and desorganizes the photosynthetic membranes when the plants are grown under high light (PubMed:24009357). No effect on photosynthetic performance (PubMed:31053658).</text>
</comment>
<comment type="similarity">
    <text evidence="12">Belongs to the two pore domain potassium channel (TC 1.A.1.7) family.</text>
</comment>
<organism>
    <name type="scientific">Arabidopsis thaliana</name>
    <name type="common">Mouse-ear cress</name>
    <dbReference type="NCBI Taxonomy" id="3702"/>
    <lineage>
        <taxon>Eukaryota</taxon>
        <taxon>Viridiplantae</taxon>
        <taxon>Streptophyta</taxon>
        <taxon>Embryophyta</taxon>
        <taxon>Tracheophyta</taxon>
        <taxon>Spermatophyta</taxon>
        <taxon>Magnoliopsida</taxon>
        <taxon>eudicotyledons</taxon>
        <taxon>Gunneridae</taxon>
        <taxon>Pentapetalae</taxon>
        <taxon>rosids</taxon>
        <taxon>malvids</taxon>
        <taxon>Brassicales</taxon>
        <taxon>Brassicaceae</taxon>
        <taxon>Camelineae</taxon>
        <taxon>Arabidopsis</taxon>
    </lineage>
</organism>
<reference key="1">
    <citation type="journal article" date="1999" name="Nature">
        <title>Sequence and analysis of chromosome 4 of the plant Arabidopsis thaliana.</title>
        <authorList>
            <person name="Mayer K.F.X."/>
            <person name="Schueller C."/>
            <person name="Wambutt R."/>
            <person name="Murphy G."/>
            <person name="Volckaert G."/>
            <person name="Pohl T."/>
            <person name="Duesterhoeft A."/>
            <person name="Stiekema W."/>
            <person name="Entian K.-D."/>
            <person name="Terryn N."/>
            <person name="Harris B."/>
            <person name="Ansorge W."/>
            <person name="Brandt P."/>
            <person name="Grivell L.A."/>
            <person name="Rieger M."/>
            <person name="Weichselgartner M."/>
            <person name="de Simone V."/>
            <person name="Obermaier B."/>
            <person name="Mache R."/>
            <person name="Mueller M."/>
            <person name="Kreis M."/>
            <person name="Delseny M."/>
            <person name="Puigdomenech P."/>
            <person name="Watson M."/>
            <person name="Schmidtheini T."/>
            <person name="Reichert B."/>
            <person name="Portetelle D."/>
            <person name="Perez-Alonso M."/>
            <person name="Boutry M."/>
            <person name="Bancroft I."/>
            <person name="Vos P."/>
            <person name="Hoheisel J."/>
            <person name="Zimmermann W."/>
            <person name="Wedler H."/>
            <person name="Ridley P."/>
            <person name="Langham S.-A."/>
            <person name="McCullagh B."/>
            <person name="Bilham L."/>
            <person name="Robben J."/>
            <person name="van der Schueren J."/>
            <person name="Grymonprez B."/>
            <person name="Chuang Y.-J."/>
            <person name="Vandenbussche F."/>
            <person name="Braeken M."/>
            <person name="Weltjens I."/>
            <person name="Voet M."/>
            <person name="Bastiaens I."/>
            <person name="Aert R."/>
            <person name="Defoor E."/>
            <person name="Weitzenegger T."/>
            <person name="Bothe G."/>
            <person name="Ramsperger U."/>
            <person name="Hilbert H."/>
            <person name="Braun M."/>
            <person name="Holzer E."/>
            <person name="Brandt A."/>
            <person name="Peters S."/>
            <person name="van Staveren M."/>
            <person name="Dirkse W."/>
            <person name="Mooijman P."/>
            <person name="Klein Lankhorst R."/>
            <person name="Rose M."/>
            <person name="Hauf J."/>
            <person name="Koetter P."/>
            <person name="Berneiser S."/>
            <person name="Hempel S."/>
            <person name="Feldpausch M."/>
            <person name="Lamberth S."/>
            <person name="Van den Daele H."/>
            <person name="De Keyser A."/>
            <person name="Buysshaert C."/>
            <person name="Gielen J."/>
            <person name="Villarroel R."/>
            <person name="De Clercq R."/>
            <person name="van Montagu M."/>
            <person name="Rogers J."/>
            <person name="Cronin A."/>
            <person name="Quail M.A."/>
            <person name="Bray-Allen S."/>
            <person name="Clark L."/>
            <person name="Doggett J."/>
            <person name="Hall S."/>
            <person name="Kay M."/>
            <person name="Lennard N."/>
            <person name="McLay K."/>
            <person name="Mayes R."/>
            <person name="Pettett A."/>
            <person name="Rajandream M.A."/>
            <person name="Lyne M."/>
            <person name="Benes V."/>
            <person name="Rechmann S."/>
            <person name="Borkova D."/>
            <person name="Bloecker H."/>
            <person name="Scharfe M."/>
            <person name="Grimm M."/>
            <person name="Loehnert T.-H."/>
            <person name="Dose S."/>
            <person name="de Haan M."/>
            <person name="Maarse A.C."/>
            <person name="Schaefer M."/>
            <person name="Mueller-Auer S."/>
            <person name="Gabel C."/>
            <person name="Fuchs M."/>
            <person name="Fartmann B."/>
            <person name="Granderath K."/>
            <person name="Dauner D."/>
            <person name="Herzl A."/>
            <person name="Neumann S."/>
            <person name="Argiriou A."/>
            <person name="Vitale D."/>
            <person name="Liguori R."/>
            <person name="Piravandi E."/>
            <person name="Massenet O."/>
            <person name="Quigley F."/>
            <person name="Clabauld G."/>
            <person name="Muendlein A."/>
            <person name="Felber R."/>
            <person name="Schnabl S."/>
            <person name="Hiller R."/>
            <person name="Schmidt W."/>
            <person name="Lecharny A."/>
            <person name="Aubourg S."/>
            <person name="Chefdor F."/>
            <person name="Cooke R."/>
            <person name="Berger C."/>
            <person name="Monfort A."/>
            <person name="Casacuberta E."/>
            <person name="Gibbons T."/>
            <person name="Weber N."/>
            <person name="Vandenbol M."/>
            <person name="Bargues M."/>
            <person name="Terol J."/>
            <person name="Torres A."/>
            <person name="Perez-Perez A."/>
            <person name="Purnelle B."/>
            <person name="Bent E."/>
            <person name="Johnson S."/>
            <person name="Tacon D."/>
            <person name="Jesse T."/>
            <person name="Heijnen L."/>
            <person name="Schwarz S."/>
            <person name="Scholler P."/>
            <person name="Heber S."/>
            <person name="Francs P."/>
            <person name="Bielke C."/>
            <person name="Frishman D."/>
            <person name="Haase D."/>
            <person name="Lemcke K."/>
            <person name="Mewes H.-W."/>
            <person name="Stocker S."/>
            <person name="Zaccaria P."/>
            <person name="Bevan M."/>
            <person name="Wilson R.K."/>
            <person name="de la Bastide M."/>
            <person name="Habermann K."/>
            <person name="Parnell L."/>
            <person name="Dedhia N."/>
            <person name="Gnoj L."/>
            <person name="Schutz K."/>
            <person name="Huang E."/>
            <person name="Spiegel L."/>
            <person name="Sekhon M."/>
            <person name="Murray J."/>
            <person name="Sheet P."/>
            <person name="Cordes M."/>
            <person name="Abu-Threideh J."/>
            <person name="Stoneking T."/>
            <person name="Kalicki J."/>
            <person name="Graves T."/>
            <person name="Harmon G."/>
            <person name="Edwards J."/>
            <person name="Latreille P."/>
            <person name="Courtney L."/>
            <person name="Cloud J."/>
            <person name="Abbott A."/>
            <person name="Scott K."/>
            <person name="Johnson D."/>
            <person name="Minx P."/>
            <person name="Bentley D."/>
            <person name="Fulton B."/>
            <person name="Miller N."/>
            <person name="Greco T."/>
            <person name="Kemp K."/>
            <person name="Kramer J."/>
            <person name="Fulton L."/>
            <person name="Mardis E."/>
            <person name="Dante M."/>
            <person name="Pepin K."/>
            <person name="Hillier L.W."/>
            <person name="Nelson J."/>
            <person name="Spieth J."/>
            <person name="Ryan E."/>
            <person name="Andrews S."/>
            <person name="Geisel C."/>
            <person name="Layman D."/>
            <person name="Du H."/>
            <person name="Ali J."/>
            <person name="Berghoff A."/>
            <person name="Jones K."/>
            <person name="Drone K."/>
            <person name="Cotton M."/>
            <person name="Joshu C."/>
            <person name="Antonoiu B."/>
            <person name="Zidanic M."/>
            <person name="Strong C."/>
            <person name="Sun H."/>
            <person name="Lamar B."/>
            <person name="Yordan C."/>
            <person name="Ma P."/>
            <person name="Zhong J."/>
            <person name="Preston R."/>
            <person name="Vil D."/>
            <person name="Shekher M."/>
            <person name="Matero A."/>
            <person name="Shah R."/>
            <person name="Swaby I.K."/>
            <person name="O'Shaughnessy A."/>
            <person name="Rodriguez M."/>
            <person name="Hoffman J."/>
            <person name="Till S."/>
            <person name="Granat S."/>
            <person name="Shohdy N."/>
            <person name="Hasegawa A."/>
            <person name="Hameed A."/>
            <person name="Lodhi M."/>
            <person name="Johnson A."/>
            <person name="Chen E."/>
            <person name="Marra M.A."/>
            <person name="Martienssen R."/>
            <person name="McCombie W.R."/>
        </authorList>
    </citation>
    <scope>NUCLEOTIDE SEQUENCE [LARGE SCALE GENOMIC DNA]</scope>
    <source>
        <strain>cv. Columbia</strain>
    </source>
</reference>
<reference key="2">
    <citation type="journal article" date="2017" name="Plant J.">
        <title>Araport11: a complete reannotation of the Arabidopsis thaliana reference genome.</title>
        <authorList>
            <person name="Cheng C.Y."/>
            <person name="Krishnakumar V."/>
            <person name="Chan A.P."/>
            <person name="Thibaud-Nissen F."/>
            <person name="Schobel S."/>
            <person name="Town C.D."/>
        </authorList>
    </citation>
    <scope>GENOME REANNOTATION</scope>
    <source>
        <strain>cv. Columbia</strain>
    </source>
</reference>
<reference key="3">
    <citation type="journal article" date="2001" name="Plant Physiol.">
        <title>Phylogenetic relationships within cation transporter families of Arabidopsis.</title>
        <authorList>
            <person name="Maeser P."/>
            <person name="Thomine S."/>
            <person name="Schroeder J.I."/>
            <person name="Ward J.M."/>
            <person name="Hirschi K."/>
            <person name="Sze H."/>
            <person name="Talke I.N."/>
            <person name="Amtmann A."/>
            <person name="Maathuis F.J.M."/>
            <person name="Sanders D."/>
            <person name="Harper J.F."/>
            <person name="Tchieu J."/>
            <person name="Gribskov M."/>
            <person name="Persans M.W."/>
            <person name="Salt D.E."/>
            <person name="Kim S.A."/>
            <person name="Guerinot M.L."/>
        </authorList>
    </citation>
    <scope>GENE FAMILY</scope>
    <scope>NOMENCLATURE</scope>
</reference>
<reference key="4">
    <citation type="journal article" date="2002" name="FEBS Lett.">
        <title>KCO1 is a component of the slow-vacuolar (SV) ion channel.</title>
        <authorList>
            <person name="Schoenknecht G."/>
            <person name="Spoormaker P."/>
            <person name="Steinmeyer R."/>
            <person name="Brueggeman L."/>
            <person name="Ache P."/>
            <person name="Dutta R."/>
            <person name="Reintanz B."/>
            <person name="Godde M."/>
            <person name="Hedrich R."/>
            <person name="Palme K."/>
        </authorList>
    </citation>
    <scope>TISSUE SPECIFICITY</scope>
</reference>
<reference key="5">
    <citation type="journal article" date="2004" name="Proc. Natl. Acad. Sci. U.S.A.">
        <title>AtTPK4, an Arabidopsis tandem-pore K+ channel, poised to control the pollen membrane voltage in a pH- and Ca2+-dependent manner.</title>
        <authorList>
            <person name="Becker D."/>
            <person name="Geiger D."/>
            <person name="Dunkel M."/>
            <person name="Roller A."/>
            <person name="Bertl A."/>
            <person name="Latz A."/>
            <person name="Carpaneto A."/>
            <person name="Dietrich P."/>
            <person name="Roelfsema M.R."/>
            <person name="Voelker C."/>
            <person name="Schmidt D."/>
            <person name="Mueller-Roeber B."/>
            <person name="Czempinski K."/>
            <person name="Hedrich R."/>
        </authorList>
    </citation>
    <scope>GENE FAMILY</scope>
    <scope>NOMENCLATURE</scope>
</reference>
<reference key="6">
    <citation type="journal article" date="2006" name="Plant J.">
        <title>Members of the Arabidopsis AtTPK/KCO family form homomeric vacuolar channels in planta.</title>
        <authorList>
            <person name="Voelker C."/>
            <person name="Schmidt D."/>
            <person name="Mueller-Roeber B."/>
            <person name="Czempinski K."/>
        </authorList>
    </citation>
    <scope>TISSUE SPECIFICITY</scope>
    <scope>SUBCELLULAR LOCATION</scope>
</reference>
<reference key="7">
    <citation type="journal article" date="2007" name="Plant J.">
        <title>TPK1, a Ca(2+)-regulated Arabidopsis vacuole two-pore K(+) channel is activated by 14-3-3 proteins.</title>
        <authorList>
            <person name="Latz A."/>
            <person name="Becker D."/>
            <person name="Hekman M."/>
            <person name="Mueller T."/>
            <person name="Beyhl D."/>
            <person name="Marten I."/>
            <person name="Eing C."/>
            <person name="Fischer A."/>
            <person name="Dunkel M."/>
            <person name="Bertl A."/>
            <person name="Rapp U.R."/>
            <person name="Hedrich R."/>
        </authorList>
    </citation>
    <scope>SUBCELLULAR LOCATION</scope>
</reference>
<reference key="8">
    <citation type="journal article" date="2008" name="Mol. Plant">
        <title>Targeting of vacuolar membrane localized members of the TPK channel family.</title>
        <authorList>
            <person name="Dunkel M."/>
            <person name="Latz A."/>
            <person name="Schumacher K."/>
            <person name="Mueller T."/>
            <person name="Becker D."/>
            <person name="Hedrich R."/>
        </authorList>
    </citation>
    <scope>SUBCELLULAR LOCATION</scope>
</reference>
<reference key="9">
    <citation type="journal article" date="2013" name="Science">
        <title>A thylakoid-located two-pore potassium channel controls photosynthetic light utilization in plants.</title>
        <authorList>
            <person name="Carraretto L."/>
            <person name="Formentin E."/>
            <person name="Teardo E."/>
            <person name="Checchetto V."/>
            <person name="Tomizioli M."/>
            <person name="Morosinotto T."/>
            <person name="Giacometti G.M."/>
            <person name="Finazzi G."/>
            <person name="Szabo I."/>
        </authorList>
    </citation>
    <scope>FUNCTION</scope>
    <scope>SUBCELLULAR LOCATION</scope>
    <scope>ACTIVITY REGULATION</scope>
    <scope>DISRUPTION PHENOTYPE</scope>
</reference>
<reference key="10">
    <citation type="journal article" date="2019" name="Plant Physiol.">
        <title>Photosynthesis in Arabidopsis is unaffected by the function of the vacuolar K+ channel TPK3.</title>
        <authorList>
            <person name="Hoehner R."/>
            <person name="Galvis V.C."/>
            <person name="Strand D.D."/>
            <person name="Voelkner C."/>
            <person name="Kraemer M."/>
            <person name="Messer M."/>
            <person name="Dinc F."/>
            <person name="Sjuts I."/>
            <person name="Boelter B."/>
            <person name="Kramer D.M."/>
            <person name="Armbruster U."/>
            <person name="Kunz H.-H."/>
        </authorList>
    </citation>
    <scope>DISRUPTION PHENOTYPE</scope>
    <scope>TISSUE SPECIFICITY</scope>
    <scope>DEVELOPMENTAL STAGE</scope>
    <scope>SUBCELLULAR LOCATION</scope>
    <source>
        <strain>cv. Columbia</strain>
    </source>
</reference>